<sequence>MLSRTIRTQGSFLRRSQLTITRSFSVTFNMQNAQKRSPTGIVLMNMGGPSKVEETYDFLYQLFADNDLIPISAKYQKTIAKYIAKFRTPKIEKQYREIGGGSPIRKWSEYQATEVCKILDKTCPETAPHKPYVAFRYAKPLTAETYKQMLKDGVKKAVAFSQYPHFSYSTTGSSINELWRQIKALDSERSISWSVIDRWPTNEGLIKAFSENITKKLQEFPQPVRDKVVLLFSAHSLPMDVVNTGDAYPAEVAATVYNIMQKLKFKNPYRLVWQSQVGPKPWLGAQTAEIAEFLGPKVDGLMFIPIAFTSDHIETLHEIDLGVIGESEYKDKFKRCESLNGNQTFIEGMADLVKSHLQSNQLYSNQLPLDFALGKSNDPVKDLSLVFGNHEST</sequence>
<dbReference type="EC" id="4.98.1.1"/>
<dbReference type="EMBL" id="J05395">
    <property type="protein sequence ID" value="AAA34667.1"/>
    <property type="molecule type" value="Genomic_DNA"/>
</dbReference>
<dbReference type="EMBL" id="X54514">
    <property type="protein sequence ID" value="CAA38371.1"/>
    <property type="molecule type" value="Genomic_DNA"/>
</dbReference>
<dbReference type="EMBL" id="Z75084">
    <property type="protein sequence ID" value="CAA99385.1"/>
    <property type="molecule type" value="Genomic_DNA"/>
</dbReference>
<dbReference type="EMBL" id="BK006948">
    <property type="protein sequence ID" value="DAA10948.1"/>
    <property type="molecule type" value="Genomic_DNA"/>
</dbReference>
<dbReference type="PIR" id="A35190">
    <property type="entry name" value="IBBYFC"/>
</dbReference>
<dbReference type="RefSeq" id="NP_014819.3">
    <property type="nucleotide sequence ID" value="NM_001183595.3"/>
</dbReference>
<dbReference type="PDB" id="1L8X">
    <property type="method" value="X-ray"/>
    <property type="resolution" value="2.70 A"/>
    <property type="chains" value="A/B=32-393"/>
</dbReference>
<dbReference type="PDB" id="1LBQ">
    <property type="method" value="X-ray"/>
    <property type="resolution" value="2.40 A"/>
    <property type="chains" value="A/B=32-393"/>
</dbReference>
<dbReference type="PDB" id="7L78">
    <property type="method" value="X-ray"/>
    <property type="resolution" value="2.40 A"/>
    <property type="chains" value="A/B=36-391"/>
</dbReference>
<dbReference type="PDBsum" id="1L8X"/>
<dbReference type="PDBsum" id="1LBQ"/>
<dbReference type="PDBsum" id="7L78"/>
<dbReference type="SMR" id="P16622"/>
<dbReference type="BioGRID" id="34570">
    <property type="interactions" value="62"/>
</dbReference>
<dbReference type="DIP" id="DIP-4133N"/>
<dbReference type="FunCoup" id="P16622">
    <property type="interactions" value="873"/>
</dbReference>
<dbReference type="IntAct" id="P16622">
    <property type="interactions" value="9"/>
</dbReference>
<dbReference type="STRING" id="4932.YOR176W"/>
<dbReference type="iPTMnet" id="P16622"/>
<dbReference type="PaxDb" id="4932-YOR176W"/>
<dbReference type="PeptideAtlas" id="P16622"/>
<dbReference type="EnsemblFungi" id="YOR176W_mRNA">
    <property type="protein sequence ID" value="YOR176W"/>
    <property type="gene ID" value="YOR176W"/>
</dbReference>
<dbReference type="GeneID" id="854347"/>
<dbReference type="KEGG" id="sce:YOR176W"/>
<dbReference type="AGR" id="SGD:S000005702"/>
<dbReference type="SGD" id="S000005702">
    <property type="gene designation" value="HEM15"/>
</dbReference>
<dbReference type="VEuPathDB" id="FungiDB:YOR176W"/>
<dbReference type="eggNOG" id="KOG1321">
    <property type="taxonomic scope" value="Eukaryota"/>
</dbReference>
<dbReference type="GeneTree" id="ENSGT00390000016258"/>
<dbReference type="HOGENOM" id="CLU_018884_1_0_1"/>
<dbReference type="InParanoid" id="P16622"/>
<dbReference type="OMA" id="DPYHCEC"/>
<dbReference type="OrthoDB" id="1323at2759"/>
<dbReference type="BioCyc" id="YEAST:YOR176W-MONOMER"/>
<dbReference type="BRENDA" id="4.99.1.1">
    <property type="organism ID" value="984"/>
</dbReference>
<dbReference type="Reactome" id="R-SCE-189451">
    <property type="pathway name" value="Heme biosynthesis"/>
</dbReference>
<dbReference type="Reactome" id="R-SCE-9837999">
    <property type="pathway name" value="Mitochondrial protein degradation"/>
</dbReference>
<dbReference type="SABIO-RK" id="P16622"/>
<dbReference type="UniPathway" id="UPA00252">
    <property type="reaction ID" value="UER00325"/>
</dbReference>
<dbReference type="BioGRID-ORCS" id="854347">
    <property type="hits" value="1 hit in 10 CRISPR screens"/>
</dbReference>
<dbReference type="EvolutionaryTrace" id="P16622"/>
<dbReference type="PRO" id="PR:P16622"/>
<dbReference type="Proteomes" id="UP000002311">
    <property type="component" value="Chromosome XV"/>
</dbReference>
<dbReference type="RNAct" id="P16622">
    <property type="molecule type" value="protein"/>
</dbReference>
<dbReference type="GO" id="GO:0005743">
    <property type="term" value="C:mitochondrial inner membrane"/>
    <property type="evidence" value="ECO:0000314"/>
    <property type="project" value="SGD"/>
</dbReference>
<dbReference type="GO" id="GO:0005739">
    <property type="term" value="C:mitochondrion"/>
    <property type="evidence" value="ECO:0007005"/>
    <property type="project" value="SGD"/>
</dbReference>
<dbReference type="GO" id="GO:0004325">
    <property type="term" value="F:ferrochelatase activity"/>
    <property type="evidence" value="ECO:0000314"/>
    <property type="project" value="SGD"/>
</dbReference>
<dbReference type="GO" id="GO:0006783">
    <property type="term" value="P:heme biosynthetic process"/>
    <property type="evidence" value="ECO:0000315"/>
    <property type="project" value="SGD"/>
</dbReference>
<dbReference type="CDD" id="cd00419">
    <property type="entry name" value="Ferrochelatase_C"/>
    <property type="match status" value="1"/>
</dbReference>
<dbReference type="CDD" id="cd03411">
    <property type="entry name" value="Ferrochelatase_N"/>
    <property type="match status" value="1"/>
</dbReference>
<dbReference type="FunFam" id="3.40.50.1400:FF:000003">
    <property type="entry name" value="Ferrochelatase"/>
    <property type="match status" value="1"/>
</dbReference>
<dbReference type="Gene3D" id="3.40.50.1400">
    <property type="match status" value="2"/>
</dbReference>
<dbReference type="HAMAP" id="MF_00323">
    <property type="entry name" value="Ferrochelatase"/>
    <property type="match status" value="1"/>
</dbReference>
<dbReference type="InterPro" id="IPR001015">
    <property type="entry name" value="Ferrochelatase"/>
</dbReference>
<dbReference type="InterPro" id="IPR019772">
    <property type="entry name" value="Ferrochelatase_AS"/>
</dbReference>
<dbReference type="InterPro" id="IPR033644">
    <property type="entry name" value="Ferrochelatase_C"/>
</dbReference>
<dbReference type="InterPro" id="IPR033659">
    <property type="entry name" value="Ferrochelatase_N"/>
</dbReference>
<dbReference type="NCBIfam" id="TIGR00109">
    <property type="entry name" value="hemH"/>
    <property type="match status" value="1"/>
</dbReference>
<dbReference type="PANTHER" id="PTHR11108">
    <property type="entry name" value="FERROCHELATASE"/>
    <property type="match status" value="1"/>
</dbReference>
<dbReference type="PANTHER" id="PTHR11108:SF1">
    <property type="entry name" value="FERROCHELATASE, MITOCHONDRIAL"/>
    <property type="match status" value="1"/>
</dbReference>
<dbReference type="Pfam" id="PF00762">
    <property type="entry name" value="Ferrochelatase"/>
    <property type="match status" value="1"/>
</dbReference>
<dbReference type="SUPFAM" id="SSF53800">
    <property type="entry name" value="Chelatase"/>
    <property type="match status" value="1"/>
</dbReference>
<dbReference type="PROSITE" id="PS00534">
    <property type="entry name" value="FERROCHELATASE"/>
    <property type="match status" value="1"/>
</dbReference>
<comment type="function">
    <text>Catalyzes the ferrous insertion into protoporphyrin IX.</text>
</comment>
<comment type="catalytic activity">
    <reaction>
        <text>heme b + 2 H(+) = protoporphyrin IX + Fe(2+)</text>
        <dbReference type="Rhea" id="RHEA:22584"/>
        <dbReference type="ChEBI" id="CHEBI:15378"/>
        <dbReference type="ChEBI" id="CHEBI:29033"/>
        <dbReference type="ChEBI" id="CHEBI:57306"/>
        <dbReference type="ChEBI" id="CHEBI:60344"/>
        <dbReference type="EC" id="4.98.1.1"/>
    </reaction>
</comment>
<comment type="pathway">
    <text>Porphyrin-containing compound metabolism; protoheme biosynthesis; protoheme from protoporphyrin-IX: step 1/1.</text>
</comment>
<comment type="subcellular location">
    <subcellularLocation>
        <location>Mitochondrion inner membrane</location>
        <topology>Peripheral membrane protein</topology>
        <orientation>Matrix side</orientation>
    </subcellularLocation>
    <text>It is bound to the mitochondrial inner membrane in eukaryotic cells with its active site on the matrix side of the membrane.</text>
</comment>
<comment type="PTM">
    <text>The leader peptide may be processed in two proteolytic steps, first between Ser-23 and Phe-24, second and by a different protease, to yield the mature protein.</text>
</comment>
<comment type="miscellaneous">
    <text>Ferrochelatase interacts with protoprophyrinogen oxidase, and associates with complex 1 of the respiratory chain.</text>
</comment>
<comment type="miscellaneous">
    <text>Acidic phospholipids or fatty acids are important for the ferrochelatase activity.</text>
</comment>
<comment type="miscellaneous">
    <text evidence="2">Present with 22700 molecules/cell in log phase SD medium.</text>
</comment>
<comment type="similarity">
    <text evidence="4">Belongs to the ferrochelatase family.</text>
</comment>
<evidence type="ECO:0000250" key="1"/>
<evidence type="ECO:0000269" key="2">
    <source>
    </source>
</evidence>
<evidence type="ECO:0000269" key="3">
    <source>
    </source>
</evidence>
<evidence type="ECO:0000305" key="4"/>
<evidence type="ECO:0007829" key="5">
    <source>
        <dbReference type="PDB" id="1LBQ"/>
    </source>
</evidence>
<evidence type="ECO:0007829" key="6">
    <source>
        <dbReference type="PDB" id="7L78"/>
    </source>
</evidence>
<reference key="1">
    <citation type="journal article" date="1990" name="J. Biol. Chem.">
        <title>The ferrochelatase from Saccharomyces cerevisiae. Sequence, disruption, and expression of its structural gene HEM15.</title>
        <authorList>
            <person name="Labbe-Bois R."/>
        </authorList>
    </citation>
    <scope>NUCLEOTIDE SEQUENCE [GENOMIC DNA]</scope>
</reference>
<reference key="2">
    <citation type="journal article" date="1990" name="Nucleic Acids Res.">
        <title>The nucleotide sequence of the ferrochelatase and tRNA(val) gene region from Saccharomyces cerevisiae.</title>
        <authorList>
            <person name="Gokhman I."/>
            <person name="Zamir A."/>
        </authorList>
    </citation>
    <scope>NUCLEOTIDE SEQUENCE [GENOMIC DNA]</scope>
</reference>
<reference key="3">
    <citation type="journal article" date="1997" name="Nature">
        <title>The nucleotide sequence of Saccharomyces cerevisiae chromosome XV.</title>
        <authorList>
            <person name="Dujon B."/>
            <person name="Albermann K."/>
            <person name="Aldea M."/>
            <person name="Alexandraki D."/>
            <person name="Ansorge W."/>
            <person name="Arino J."/>
            <person name="Benes V."/>
            <person name="Bohn C."/>
            <person name="Bolotin-Fukuhara M."/>
            <person name="Bordonne R."/>
            <person name="Boyer J."/>
            <person name="Camasses A."/>
            <person name="Casamayor A."/>
            <person name="Casas C."/>
            <person name="Cheret G."/>
            <person name="Cziepluch C."/>
            <person name="Daignan-Fornier B."/>
            <person name="Dang V.-D."/>
            <person name="de Haan M."/>
            <person name="Delius H."/>
            <person name="Durand P."/>
            <person name="Fairhead C."/>
            <person name="Feldmann H."/>
            <person name="Gaillon L."/>
            <person name="Galisson F."/>
            <person name="Gamo F.-J."/>
            <person name="Gancedo C."/>
            <person name="Goffeau A."/>
            <person name="Goulding S.E."/>
            <person name="Grivell L.A."/>
            <person name="Habbig B."/>
            <person name="Hand N.J."/>
            <person name="Hani J."/>
            <person name="Hattenhorst U."/>
            <person name="Hebling U."/>
            <person name="Hernando Y."/>
            <person name="Herrero E."/>
            <person name="Heumann K."/>
            <person name="Hiesel R."/>
            <person name="Hilger F."/>
            <person name="Hofmann B."/>
            <person name="Hollenberg C.P."/>
            <person name="Hughes B."/>
            <person name="Jauniaux J.-C."/>
            <person name="Kalogeropoulos A."/>
            <person name="Katsoulou C."/>
            <person name="Kordes E."/>
            <person name="Lafuente M.J."/>
            <person name="Landt O."/>
            <person name="Louis E.J."/>
            <person name="Maarse A.C."/>
            <person name="Madania A."/>
            <person name="Mannhaupt G."/>
            <person name="Marck C."/>
            <person name="Martin R.P."/>
            <person name="Mewes H.-W."/>
            <person name="Michaux G."/>
            <person name="Paces V."/>
            <person name="Parle-McDermott A.G."/>
            <person name="Pearson B.M."/>
            <person name="Perrin A."/>
            <person name="Pettersson B."/>
            <person name="Poch O."/>
            <person name="Pohl T.M."/>
            <person name="Poirey R."/>
            <person name="Portetelle D."/>
            <person name="Pujol A."/>
            <person name="Purnelle B."/>
            <person name="Ramezani Rad M."/>
            <person name="Rechmann S."/>
            <person name="Schwager C."/>
            <person name="Schweizer M."/>
            <person name="Sor F."/>
            <person name="Sterky F."/>
            <person name="Tarassov I.A."/>
            <person name="Teodoru C."/>
            <person name="Tettelin H."/>
            <person name="Thierry A."/>
            <person name="Tobiasch E."/>
            <person name="Tzermia M."/>
            <person name="Uhlen M."/>
            <person name="Unseld M."/>
            <person name="Valens M."/>
            <person name="Vandenbol M."/>
            <person name="Vetter I."/>
            <person name="Vlcek C."/>
            <person name="Voet M."/>
            <person name="Volckaert G."/>
            <person name="Voss H."/>
            <person name="Wambutt R."/>
            <person name="Wedler H."/>
            <person name="Wiemann S."/>
            <person name="Winsor B."/>
            <person name="Wolfe K.H."/>
            <person name="Zollner A."/>
            <person name="Zumstein E."/>
            <person name="Kleine K."/>
        </authorList>
    </citation>
    <scope>NUCLEOTIDE SEQUENCE [LARGE SCALE GENOMIC DNA]</scope>
    <source>
        <strain>ATCC 204508 / S288c</strain>
    </source>
</reference>
<reference key="4">
    <citation type="journal article" date="2014" name="G3 (Bethesda)">
        <title>The reference genome sequence of Saccharomyces cerevisiae: Then and now.</title>
        <authorList>
            <person name="Engel S.R."/>
            <person name="Dietrich F.S."/>
            <person name="Fisk D.G."/>
            <person name="Binkley G."/>
            <person name="Balakrishnan R."/>
            <person name="Costanzo M.C."/>
            <person name="Dwight S.S."/>
            <person name="Hitz B.C."/>
            <person name="Karra K."/>
            <person name="Nash R.S."/>
            <person name="Weng S."/>
            <person name="Wong E.D."/>
            <person name="Lloyd P."/>
            <person name="Skrzypek M.S."/>
            <person name="Miyasato S.R."/>
            <person name="Simison M."/>
            <person name="Cherry J.M."/>
        </authorList>
    </citation>
    <scope>GENOME REANNOTATION</scope>
    <source>
        <strain>ATCC 204508 / S288c</strain>
    </source>
</reference>
<reference key="5">
    <citation type="journal article" date="1988" name="J. Biol. Chem.">
        <title>Purification and properties of ferrochelatase from the yeast Saccharomyces cerevisiae. Evidence for a precursor form of the protein.</title>
        <authorList>
            <person name="Camadro J.-M."/>
            <person name="Labbe P."/>
        </authorList>
    </citation>
    <scope>PROTEIN SEQUENCE OF 32-51</scope>
</reference>
<reference key="6">
    <citation type="journal article" date="2003" name="Nature">
        <title>Global analysis of protein expression in yeast.</title>
        <authorList>
            <person name="Ghaemmaghami S."/>
            <person name="Huh W.-K."/>
            <person name="Bower K."/>
            <person name="Howson R.W."/>
            <person name="Belle A."/>
            <person name="Dephoure N."/>
            <person name="O'Shea E.K."/>
            <person name="Weissman J.S."/>
        </authorList>
    </citation>
    <scope>LEVEL OF PROTEIN EXPRESSION [LARGE SCALE ANALYSIS]</scope>
</reference>
<name>HEMH_YEAST</name>
<accession>P16622</accession>
<accession>D6W2N2</accession>
<organism>
    <name type="scientific">Saccharomyces cerevisiae (strain ATCC 204508 / S288c)</name>
    <name type="common">Baker's yeast</name>
    <dbReference type="NCBI Taxonomy" id="559292"/>
    <lineage>
        <taxon>Eukaryota</taxon>
        <taxon>Fungi</taxon>
        <taxon>Dikarya</taxon>
        <taxon>Ascomycota</taxon>
        <taxon>Saccharomycotina</taxon>
        <taxon>Saccharomycetes</taxon>
        <taxon>Saccharomycetales</taxon>
        <taxon>Saccharomycetaceae</taxon>
        <taxon>Saccharomyces</taxon>
    </lineage>
</organism>
<protein>
    <recommendedName>
        <fullName>Ferrochelatase, mitochondrial</fullName>
        <ecNumber>4.98.1.1</ecNumber>
    </recommendedName>
    <alternativeName>
        <fullName>Heme synthase</fullName>
    </alternativeName>
    <alternativeName>
        <fullName>Protoheme ferro-lyase</fullName>
    </alternativeName>
</protein>
<keyword id="KW-0002">3D-structure</keyword>
<keyword id="KW-0903">Direct protein sequencing</keyword>
<keyword id="KW-0350">Heme biosynthesis</keyword>
<keyword id="KW-0408">Iron</keyword>
<keyword id="KW-0456">Lyase</keyword>
<keyword id="KW-0472">Membrane</keyword>
<keyword id="KW-0496">Mitochondrion</keyword>
<keyword id="KW-0999">Mitochondrion inner membrane</keyword>
<keyword id="KW-0627">Porphyrin biosynthesis</keyword>
<keyword id="KW-1185">Reference proteome</keyword>
<keyword id="KW-0809">Transit peptide</keyword>
<proteinExistence type="evidence at protein level"/>
<feature type="transit peptide" description="Mitochondrion" evidence="3">
    <location>
        <begin position="1"/>
        <end position="31"/>
    </location>
</feature>
<feature type="chain" id="PRO_0000008879" description="Ferrochelatase, mitochondrial">
    <location>
        <begin position="32"/>
        <end position="393"/>
    </location>
</feature>
<feature type="active site" evidence="1">
    <location>
        <position position="351"/>
    </location>
</feature>
<feature type="sequence conflict" description="In Ref. 5; AA sequence." evidence="4" ref="5">
    <original>Q</original>
    <variation>E</variation>
    <location>
        <position position="34"/>
    </location>
</feature>
<feature type="strand" evidence="5">
    <location>
        <begin position="39"/>
        <end position="45"/>
    </location>
</feature>
<feature type="helix" evidence="5">
    <location>
        <begin position="52"/>
        <end position="54"/>
    </location>
</feature>
<feature type="helix" evidence="5">
    <location>
        <begin position="55"/>
        <end position="62"/>
    </location>
</feature>
<feature type="strand" evidence="5">
    <location>
        <begin position="67"/>
        <end position="69"/>
    </location>
</feature>
<feature type="strand" evidence="5">
    <location>
        <begin position="73"/>
        <end position="75"/>
    </location>
</feature>
<feature type="helix" evidence="5">
    <location>
        <begin position="76"/>
        <end position="97"/>
    </location>
</feature>
<feature type="helix" evidence="5">
    <location>
        <begin position="104"/>
        <end position="122"/>
    </location>
</feature>
<feature type="helix" evidence="5">
    <location>
        <begin position="124"/>
        <end position="126"/>
    </location>
</feature>
<feature type="strand" evidence="5">
    <location>
        <begin position="129"/>
        <end position="140"/>
    </location>
</feature>
<feature type="helix" evidence="5">
    <location>
        <begin position="142"/>
        <end position="150"/>
    </location>
</feature>
<feature type="turn" evidence="5">
    <location>
        <begin position="151"/>
        <end position="153"/>
    </location>
</feature>
<feature type="strand" evidence="5">
    <location>
        <begin position="156"/>
        <end position="162"/>
    </location>
</feature>
<feature type="turn" evidence="5">
    <location>
        <begin position="168"/>
        <end position="170"/>
    </location>
</feature>
<feature type="helix" evidence="5">
    <location>
        <begin position="171"/>
        <end position="185"/>
    </location>
</feature>
<feature type="strand" evidence="5">
    <location>
        <begin position="191"/>
        <end position="196"/>
    </location>
</feature>
<feature type="helix" evidence="5">
    <location>
        <begin position="203"/>
        <end position="218"/>
    </location>
</feature>
<feature type="helix" evidence="5">
    <location>
        <begin position="225"/>
        <end position="227"/>
    </location>
</feature>
<feature type="strand" evidence="5">
    <location>
        <begin position="229"/>
        <end position="235"/>
    </location>
</feature>
<feature type="helix" evidence="5">
    <location>
        <begin position="239"/>
        <end position="242"/>
    </location>
</feature>
<feature type="turn" evidence="5">
    <location>
        <begin position="243"/>
        <end position="245"/>
    </location>
</feature>
<feature type="helix" evidence="5">
    <location>
        <begin position="248"/>
        <end position="262"/>
    </location>
</feature>
<feature type="turn" evidence="5">
    <location>
        <begin position="263"/>
        <end position="265"/>
    </location>
</feature>
<feature type="strand" evidence="5">
    <location>
        <begin position="269"/>
        <end position="274"/>
    </location>
</feature>
<feature type="strand" evidence="5">
    <location>
        <begin position="278"/>
        <end position="280"/>
    </location>
</feature>
<feature type="strand" evidence="6">
    <location>
        <begin position="282"/>
        <end position="286"/>
    </location>
</feature>
<feature type="helix" evidence="5">
    <location>
        <begin position="287"/>
        <end position="294"/>
    </location>
</feature>
<feature type="helix" evidence="5">
    <location>
        <begin position="295"/>
        <end position="297"/>
    </location>
</feature>
<feature type="strand" evidence="5">
    <location>
        <begin position="301"/>
        <end position="304"/>
    </location>
</feature>
<feature type="helix" evidence="5">
    <location>
        <begin position="313"/>
        <end position="316"/>
    </location>
</feature>
<feature type="helix" evidence="5">
    <location>
        <begin position="317"/>
        <end position="324"/>
    </location>
</feature>
<feature type="helix" evidence="5">
    <location>
        <begin position="330"/>
        <end position="332"/>
    </location>
</feature>
<feature type="strand" evidence="5">
    <location>
        <begin position="333"/>
        <end position="335"/>
    </location>
</feature>
<feature type="helix" evidence="5">
    <location>
        <begin position="343"/>
        <end position="359"/>
    </location>
</feature>
<feature type="helix" evidence="5">
    <location>
        <begin position="367"/>
        <end position="373"/>
    </location>
</feature>
<feature type="helix" evidence="5">
    <location>
        <begin position="383"/>
        <end position="386"/>
    </location>
</feature>
<gene>
    <name type="primary">HEM15</name>
    <name type="ordered locus">YOR176W</name>
</gene>